<reference key="1">
    <citation type="submission" date="2007-03" db="EMBL/GenBank/DDBJ databases">
        <title>Sequencing analysis of Barbarea verna chloroplast DNA.</title>
        <authorList>
            <person name="Hosouchi T."/>
            <person name="Tsuruoka H."/>
            <person name="Kotani H."/>
        </authorList>
    </citation>
    <scope>NUCLEOTIDE SEQUENCE [LARGE SCALE GENOMIC DNA]</scope>
</reference>
<geneLocation type="chloroplast"/>
<sequence length="1791" mass="214030">MMVFQSFILGNLVSLCMKIINSVVVVGLYYGFLTTFSIGPSYLFLLRARVMDEGEEGTEKKVSATTGFIAGQLMMFISIYYAPLHLALGRPHTITVLALPYLLFHFFWNNHKHFFDYGSTTRNEMRNLRIQCVFLNNLIFQLFNHFILPSSMLARLVNIYMFRCNNKMLFVTSSFVGWLIGHILFMKWVGLVLVWIQQNHSIRSNVLIRSNKYKFLVSELRNSMARIFSILLFITCVYYLGRIPSPIFTKKLKGTSETGGTKQDQEVSTEEAPFPSLFSEEREDLDKIDEMEEIRVNGKDKINKDDEFHVRTYYNYKTVSENLDGNKENSNLEFFKIKKKEDRFLWFEKPFVTLVFDYKRWNRPNRYIKNDKIENTVRNEMSQYFFYTCQSDGKERISFTYPPNLSTFFEMIQKKIPSFTREKRPSDQVSTYWSLINEEKKENLKKEFLNRIDALDKEWSGENILEKTTRFCHNETKKEYLPKIYDPFLHGVSRGRIKKLPQFQIITESNRKKNIGGSWINKIHGILLKINYHKFEQTIEKLNRESLSIEKKLSFFSEPQEEKIYSEEEIQIFKFLFDVVITDSNDQTLIKNFMDFHEITKKVPRWSYKLISELEDLEGENEENVTMEPGIRSRKAKRVVVFTDKEPHNEIYTNLKDNQNSDQNDEMALIRYSQQSDFRREIIKGSMRSQRRKTVIWEFFQAKVHSPLFFDRIDKLFYFSFDIWGLKKKILSNLMCKKKKKKKMDKKDEEQSKIEEKRQIEIAETWDSFLFAQIIRGSLLVTQSILRKYIILPLLIIIKNSVRMLLFQFPEWSEDLKDWKREMHVKCTYNGVQLSETEFPKNWLTDGIQIKILFPFYLKPWHKQSSQKARLKKKRDKGEKKDFCFLTVWGMETELPFGSAQKKPSFFEPISKELKKRINKFKTKSFLVLRIFKERATIFIKVTKEIKNRILKNFLFIKGKIKDLSKRNLIPLFGPREIYELNETKKDSIMSNQMIHELSVQKKSMEWTNSSLSENKIQNVIDRIKTIRNQIKEISKEKQNLTNSCNKLRYDSKIIEPSKKIWQTFKRKNTRLIRKSIFFIKFCIEQLSIAIFLGIINIPRITTQLFFESTKTILDKYIYKAEENGEKKKKKKNTIYFISTIKNLISNKKKISYDLCSLSQAYVFYKLSQIQVSNFSKLKAVLEYNICITSLFVKNQIKDFFQEQGIFHYDLKDKTFFNSEVNQWKNWLRSNYQYNLPQIAWARLVTKKWKKKINQDSLVLNPSLTKEDSYEKKKFDNYKKQSVFEADSLLNPKHNLKKNSIYNLFCYKSIHSTEKTFDTSIGIALDNCLVSCFLEKYNIRGIGEIRHRKYLDWRILNFWFTKKVNIEPWVDTKSKKKYINTKVQNYQRIDKITKTGLANQKSLFFDWMGMNEEILNRRITNFEFFFFPEFFLFSSTYKMKPWVIPIKLLLLNFNENINVNKKITRKKKGFIPSNEKKSLRFYNLNKEEKESASQVELESDKENKKNPESALLKQEKNIEENYAESTIKKRKNKKQYKSNTEAELDLFLTRHSRFQLRWNCFFNQKILNNVKVYCLLVRLKNPNEIAISSIERGEMSLDILMIEKNFTFAKLMKKGILIIEPVRLSVQNDGQLIIYRTIGISLVHKNKHKISQRYKKKSYSDKQKIEKSITKYQNKTVNRKKNNYDFFVPENILSPKRRREFRILICFNLKKKNARDRNSRFDKNIQNLTTVLDKKKDLVKNKNNLIKFKSFLWPNFRLEDLACMNRYWFNTTNGNHFSMIRIHMYTRFPLH</sequence>
<dbReference type="EMBL" id="AP009370">
    <property type="protein sequence ID" value="BAF50170.1"/>
    <property type="molecule type" value="Genomic_DNA"/>
</dbReference>
<dbReference type="EMBL" id="AP009370">
    <property type="protein sequence ID" value="BAF50158.1"/>
    <property type="molecule type" value="Genomic_DNA"/>
</dbReference>
<dbReference type="GO" id="GO:0009706">
    <property type="term" value="C:chloroplast inner membrane"/>
    <property type="evidence" value="ECO:0007669"/>
    <property type="project" value="UniProtKB-SubCell"/>
</dbReference>
<dbReference type="GO" id="GO:0015031">
    <property type="term" value="P:protein transport"/>
    <property type="evidence" value="ECO:0007669"/>
    <property type="project" value="UniProtKB-KW"/>
</dbReference>
<dbReference type="InterPro" id="IPR008896">
    <property type="entry name" value="TIC214"/>
</dbReference>
<dbReference type="PANTHER" id="PTHR33163:SF40">
    <property type="entry name" value="PROTEIN TIC 214"/>
    <property type="match status" value="1"/>
</dbReference>
<dbReference type="PANTHER" id="PTHR33163">
    <property type="entry name" value="PROTEIN TIC 214-RELATED"/>
    <property type="match status" value="1"/>
</dbReference>
<dbReference type="Pfam" id="PF05758">
    <property type="entry name" value="Ycf1"/>
    <property type="match status" value="1"/>
</dbReference>
<organism>
    <name type="scientific">Barbarea verna</name>
    <name type="common">Land cress</name>
    <name type="synonym">Erysimum vernum</name>
    <dbReference type="NCBI Taxonomy" id="50458"/>
    <lineage>
        <taxon>Eukaryota</taxon>
        <taxon>Viridiplantae</taxon>
        <taxon>Streptophyta</taxon>
        <taxon>Embryophyta</taxon>
        <taxon>Tracheophyta</taxon>
        <taxon>Spermatophyta</taxon>
        <taxon>Magnoliopsida</taxon>
        <taxon>eudicotyledons</taxon>
        <taxon>Gunneridae</taxon>
        <taxon>Pentapetalae</taxon>
        <taxon>rosids</taxon>
        <taxon>malvids</taxon>
        <taxon>Brassicales</taxon>
        <taxon>Brassicaceae</taxon>
        <taxon>Cardamineae</taxon>
        <taxon>Barbarea</taxon>
    </lineage>
</organism>
<comment type="function">
    <text evidence="1">Involved in protein precursor import into chloroplasts. May be part of an intermediate translocation complex acting as a protein-conducting channel at the inner envelope.</text>
</comment>
<comment type="subunit">
    <text evidence="1">Part of the Tic complex.</text>
</comment>
<comment type="subcellular location">
    <subcellularLocation>
        <location evidence="1">Plastid</location>
        <location evidence="1">Chloroplast inner membrane</location>
        <topology evidence="2">Multi-pass membrane protein</topology>
    </subcellularLocation>
</comment>
<comment type="miscellaneous">
    <text>There is a partial copy of the N-terminus (positions 1-343) of ycf1 in the inverted repeat (BAF50158).</text>
</comment>
<comment type="similarity">
    <text evidence="4">Belongs to the TIC214 family.</text>
</comment>
<protein>
    <recommendedName>
        <fullName evidence="1">Protein TIC 214</fullName>
    </recommendedName>
    <alternativeName>
        <fullName evidence="1">Translocon at the inner envelope membrane of chloroplasts 214</fullName>
        <shortName evidence="1">AtTIC214</shortName>
    </alternativeName>
</protein>
<proteinExistence type="inferred from homology"/>
<gene>
    <name evidence="1" type="primary">TIC214</name>
    <name type="synonym">ycf1-A</name>
</gene>
<gene>
    <name evidence="1" type="primary">TIC214</name>
    <name type="synonym">ycf1-B</name>
</gene>
<name>TI214_BARVE</name>
<accession>A4QKG5</accession>
<accession>A4QKF3</accession>
<feature type="chain" id="PRO_0000326562" description="Protein TIC 214">
    <location>
        <begin position="1"/>
        <end position="1791"/>
    </location>
</feature>
<feature type="transmembrane region" description="Helical" evidence="2">
    <location>
        <begin position="19"/>
        <end position="39"/>
    </location>
</feature>
<feature type="transmembrane region" description="Helical" evidence="2">
    <location>
        <begin position="68"/>
        <end position="88"/>
    </location>
</feature>
<feature type="transmembrane region" description="Helical" evidence="2">
    <location>
        <begin position="91"/>
        <end position="111"/>
    </location>
</feature>
<feature type="transmembrane region" description="Helical" evidence="2">
    <location>
        <begin position="133"/>
        <end position="153"/>
    </location>
</feature>
<feature type="transmembrane region" description="Helical" evidence="2">
    <location>
        <begin position="176"/>
        <end position="196"/>
    </location>
</feature>
<feature type="transmembrane region" description="Helical" evidence="2">
    <location>
        <begin position="227"/>
        <end position="247"/>
    </location>
</feature>
<feature type="region of interest" description="Disordered" evidence="3">
    <location>
        <begin position="1492"/>
        <end position="1511"/>
    </location>
</feature>
<feature type="compositionally biased region" description="Basic and acidic residues" evidence="3">
    <location>
        <begin position="1498"/>
        <end position="1511"/>
    </location>
</feature>
<evidence type="ECO:0000250" key="1">
    <source>
        <dbReference type="UniProtKB" id="P56785"/>
    </source>
</evidence>
<evidence type="ECO:0000255" key="2"/>
<evidence type="ECO:0000256" key="3">
    <source>
        <dbReference type="SAM" id="MobiDB-lite"/>
    </source>
</evidence>
<evidence type="ECO:0000305" key="4"/>
<keyword id="KW-0150">Chloroplast</keyword>
<keyword id="KW-0472">Membrane</keyword>
<keyword id="KW-0934">Plastid</keyword>
<keyword id="KW-1001">Plastid inner membrane</keyword>
<keyword id="KW-0653">Protein transport</keyword>
<keyword id="KW-0812">Transmembrane</keyword>
<keyword id="KW-1133">Transmembrane helix</keyword>
<keyword id="KW-0813">Transport</keyword>